<sequence length="440" mass="49733">MQAYFDQLDRVRYEGSKSSNPLAFRHYNPDELVLGKRMEEHLRFAACYWHTFCWNGADMFGVGAFNRPWQQPGEALALAKRKADVAFEFFHKLHVPFYCFHDVDVSPEGASLKEYINNFAQMVDVLAAKQEESGVKLLWGTANCFTNPRYGAGAATNPDPEVFSWAATQVVTAMEATHKLGGENYVLWGGREGYETLLNTDLRQEREQLGRFMQMVVEHKHKIGFQGTLLIEPKPQEPTKHQYDYDAATVYGFLKQFGLEKEIKLNIEANHATLAGHSFHHEIATAIALGLFGSVDANRGDAQLGWDTDQFPNSVEENALVMYEILKAGGFTTGGLNFDAKVRRQSTDKYDLFYGHIGAMDTMALALKIAARMIEDGELDKRIAQRYSGWNSELGQQILKGQMSLADLAKYAQEHNLSPVHQSGRQEQLENLVNHYLFDK</sequence>
<name>XYLA_SHISS</name>
<gene>
    <name evidence="1" type="primary">xylA</name>
    <name type="ordered locus">SSON_3820</name>
</gene>
<dbReference type="EC" id="5.3.1.5" evidence="1"/>
<dbReference type="EMBL" id="CP000038">
    <property type="protein sequence ID" value="AAZ90362.1"/>
    <property type="molecule type" value="Genomic_DNA"/>
</dbReference>
<dbReference type="RefSeq" id="WP_001149581.1">
    <property type="nucleotide sequence ID" value="NC_007384.1"/>
</dbReference>
<dbReference type="SMR" id="Q3YVV0"/>
<dbReference type="GeneID" id="93778299"/>
<dbReference type="KEGG" id="ssn:SSON_3820"/>
<dbReference type="HOGENOM" id="CLU_037261_1_0_6"/>
<dbReference type="Proteomes" id="UP000002529">
    <property type="component" value="Chromosome"/>
</dbReference>
<dbReference type="GO" id="GO:0005737">
    <property type="term" value="C:cytoplasm"/>
    <property type="evidence" value="ECO:0007669"/>
    <property type="project" value="UniProtKB-SubCell"/>
</dbReference>
<dbReference type="GO" id="GO:0000287">
    <property type="term" value="F:magnesium ion binding"/>
    <property type="evidence" value="ECO:0007669"/>
    <property type="project" value="UniProtKB-UniRule"/>
</dbReference>
<dbReference type="GO" id="GO:0009045">
    <property type="term" value="F:xylose isomerase activity"/>
    <property type="evidence" value="ECO:0007669"/>
    <property type="project" value="UniProtKB-UniRule"/>
</dbReference>
<dbReference type="GO" id="GO:0042732">
    <property type="term" value="P:D-xylose metabolic process"/>
    <property type="evidence" value="ECO:0007669"/>
    <property type="project" value="UniProtKB-UniRule"/>
</dbReference>
<dbReference type="FunFam" id="3.20.20.150:FF:000002">
    <property type="entry name" value="Xylose isomerase"/>
    <property type="match status" value="1"/>
</dbReference>
<dbReference type="Gene3D" id="3.20.20.150">
    <property type="entry name" value="Divalent-metal-dependent TIM barrel enzymes"/>
    <property type="match status" value="1"/>
</dbReference>
<dbReference type="HAMAP" id="MF_00455">
    <property type="entry name" value="Xylose_isom_A"/>
    <property type="match status" value="1"/>
</dbReference>
<dbReference type="InterPro" id="IPR036237">
    <property type="entry name" value="Xyl_isomerase-like_sf"/>
</dbReference>
<dbReference type="InterPro" id="IPR013452">
    <property type="entry name" value="Xylose_isom_bac"/>
</dbReference>
<dbReference type="InterPro" id="IPR001998">
    <property type="entry name" value="Xylose_isomerase"/>
</dbReference>
<dbReference type="NCBIfam" id="NF003998">
    <property type="entry name" value="PRK05474.1"/>
    <property type="match status" value="1"/>
</dbReference>
<dbReference type="NCBIfam" id="TIGR02630">
    <property type="entry name" value="xylose_isom_A"/>
    <property type="match status" value="1"/>
</dbReference>
<dbReference type="PANTHER" id="PTHR48408">
    <property type="match status" value="1"/>
</dbReference>
<dbReference type="PANTHER" id="PTHR48408:SF1">
    <property type="entry name" value="XYLOSE ISOMERASE"/>
    <property type="match status" value="1"/>
</dbReference>
<dbReference type="PRINTS" id="PR00688">
    <property type="entry name" value="XYLOSISMRASE"/>
</dbReference>
<dbReference type="SUPFAM" id="SSF51658">
    <property type="entry name" value="Xylose isomerase-like"/>
    <property type="match status" value="1"/>
</dbReference>
<dbReference type="PROSITE" id="PS51415">
    <property type="entry name" value="XYLOSE_ISOMERASE"/>
    <property type="match status" value="1"/>
</dbReference>
<evidence type="ECO:0000255" key="1">
    <source>
        <dbReference type="HAMAP-Rule" id="MF_00455"/>
    </source>
</evidence>
<keyword id="KW-0119">Carbohydrate metabolism</keyword>
<keyword id="KW-0963">Cytoplasm</keyword>
<keyword id="KW-0413">Isomerase</keyword>
<keyword id="KW-0460">Magnesium</keyword>
<keyword id="KW-0479">Metal-binding</keyword>
<keyword id="KW-1185">Reference proteome</keyword>
<keyword id="KW-0859">Xylose metabolism</keyword>
<accession>Q3YVV0</accession>
<protein>
    <recommendedName>
        <fullName evidence="1">Xylose isomerase</fullName>
        <ecNumber evidence="1">5.3.1.5</ecNumber>
    </recommendedName>
</protein>
<feature type="chain" id="PRO_0000236973" description="Xylose isomerase">
    <location>
        <begin position="1"/>
        <end position="440"/>
    </location>
</feature>
<feature type="active site" evidence="1">
    <location>
        <position position="101"/>
    </location>
</feature>
<feature type="active site" evidence="1">
    <location>
        <position position="104"/>
    </location>
</feature>
<feature type="binding site" evidence="1">
    <location>
        <position position="232"/>
    </location>
    <ligand>
        <name>Mg(2+)</name>
        <dbReference type="ChEBI" id="CHEBI:18420"/>
        <label>1</label>
    </ligand>
</feature>
<feature type="binding site" evidence="1">
    <location>
        <position position="268"/>
    </location>
    <ligand>
        <name>Mg(2+)</name>
        <dbReference type="ChEBI" id="CHEBI:18420"/>
        <label>1</label>
    </ligand>
</feature>
<feature type="binding site" evidence="1">
    <location>
        <position position="268"/>
    </location>
    <ligand>
        <name>Mg(2+)</name>
        <dbReference type="ChEBI" id="CHEBI:18420"/>
        <label>2</label>
    </ligand>
</feature>
<feature type="binding site" evidence="1">
    <location>
        <position position="271"/>
    </location>
    <ligand>
        <name>Mg(2+)</name>
        <dbReference type="ChEBI" id="CHEBI:18420"/>
        <label>2</label>
    </ligand>
</feature>
<feature type="binding site" evidence="1">
    <location>
        <position position="296"/>
    </location>
    <ligand>
        <name>Mg(2+)</name>
        <dbReference type="ChEBI" id="CHEBI:18420"/>
        <label>1</label>
    </ligand>
</feature>
<feature type="binding site" evidence="1">
    <location>
        <position position="307"/>
    </location>
    <ligand>
        <name>Mg(2+)</name>
        <dbReference type="ChEBI" id="CHEBI:18420"/>
        <label>2</label>
    </ligand>
</feature>
<feature type="binding site" evidence="1">
    <location>
        <position position="309"/>
    </location>
    <ligand>
        <name>Mg(2+)</name>
        <dbReference type="ChEBI" id="CHEBI:18420"/>
        <label>2</label>
    </ligand>
</feature>
<feature type="binding site" evidence="1">
    <location>
        <position position="339"/>
    </location>
    <ligand>
        <name>Mg(2+)</name>
        <dbReference type="ChEBI" id="CHEBI:18420"/>
        <label>1</label>
    </ligand>
</feature>
<reference key="1">
    <citation type="journal article" date="2005" name="Nucleic Acids Res.">
        <title>Genome dynamics and diversity of Shigella species, the etiologic agents of bacillary dysentery.</title>
        <authorList>
            <person name="Yang F."/>
            <person name="Yang J."/>
            <person name="Zhang X."/>
            <person name="Chen L."/>
            <person name="Jiang Y."/>
            <person name="Yan Y."/>
            <person name="Tang X."/>
            <person name="Wang J."/>
            <person name="Xiong Z."/>
            <person name="Dong J."/>
            <person name="Xue Y."/>
            <person name="Zhu Y."/>
            <person name="Xu X."/>
            <person name="Sun L."/>
            <person name="Chen S."/>
            <person name="Nie H."/>
            <person name="Peng J."/>
            <person name="Xu J."/>
            <person name="Wang Y."/>
            <person name="Yuan Z."/>
            <person name="Wen Y."/>
            <person name="Yao Z."/>
            <person name="Shen Y."/>
            <person name="Qiang B."/>
            <person name="Hou Y."/>
            <person name="Yu J."/>
            <person name="Jin Q."/>
        </authorList>
    </citation>
    <scope>NUCLEOTIDE SEQUENCE [LARGE SCALE GENOMIC DNA]</scope>
    <source>
        <strain>Ss046</strain>
    </source>
</reference>
<organism>
    <name type="scientific">Shigella sonnei (strain Ss046)</name>
    <dbReference type="NCBI Taxonomy" id="300269"/>
    <lineage>
        <taxon>Bacteria</taxon>
        <taxon>Pseudomonadati</taxon>
        <taxon>Pseudomonadota</taxon>
        <taxon>Gammaproteobacteria</taxon>
        <taxon>Enterobacterales</taxon>
        <taxon>Enterobacteriaceae</taxon>
        <taxon>Shigella</taxon>
    </lineage>
</organism>
<comment type="catalytic activity">
    <reaction evidence="1">
        <text>alpha-D-xylose = alpha-D-xylulofuranose</text>
        <dbReference type="Rhea" id="RHEA:22816"/>
        <dbReference type="ChEBI" id="CHEBI:28518"/>
        <dbReference type="ChEBI" id="CHEBI:188998"/>
        <dbReference type="EC" id="5.3.1.5"/>
    </reaction>
</comment>
<comment type="cofactor">
    <cofactor evidence="1">
        <name>Mg(2+)</name>
        <dbReference type="ChEBI" id="CHEBI:18420"/>
    </cofactor>
    <text evidence="1">Binds 2 magnesium ions per subunit.</text>
</comment>
<comment type="subunit">
    <text evidence="1">Homotetramer.</text>
</comment>
<comment type="subcellular location">
    <subcellularLocation>
        <location evidence="1">Cytoplasm</location>
    </subcellularLocation>
</comment>
<comment type="similarity">
    <text evidence="1">Belongs to the xylose isomerase family.</text>
</comment>
<proteinExistence type="inferred from homology"/>